<protein>
    <recommendedName>
        <fullName>Protein-lysine N-methyltransferase SMYD4</fullName>
        <ecNumber evidence="4">2.1.1.-</ecNumber>
    </recommendedName>
    <alternativeName>
        <fullName>SET and MYND domain-containing protein 4</fullName>
    </alternativeName>
</protein>
<proteinExistence type="evidence at transcript level"/>
<dbReference type="EC" id="2.1.1.-" evidence="4"/>
<dbReference type="EMBL" id="AJ851550">
    <property type="protein sequence ID" value="CAH65184.1"/>
    <property type="molecule type" value="mRNA"/>
</dbReference>
<dbReference type="RefSeq" id="NP_001025886.1">
    <property type="nucleotide sequence ID" value="NM_001030715.1"/>
</dbReference>
<dbReference type="SMR" id="Q5F3V0"/>
<dbReference type="FunCoup" id="Q5F3V0">
    <property type="interactions" value="510"/>
</dbReference>
<dbReference type="STRING" id="9031.ENSGALP00000073890"/>
<dbReference type="PaxDb" id="9031-ENSGALP00000004786"/>
<dbReference type="GeneID" id="417562"/>
<dbReference type="KEGG" id="gga:417562"/>
<dbReference type="CTD" id="114826"/>
<dbReference type="VEuPathDB" id="HostDB:geneid_417562"/>
<dbReference type="eggNOG" id="KOG2084">
    <property type="taxonomic scope" value="Eukaryota"/>
</dbReference>
<dbReference type="InParanoid" id="Q5F3V0"/>
<dbReference type="OrthoDB" id="62495at2759"/>
<dbReference type="PhylomeDB" id="Q5F3V0"/>
<dbReference type="PRO" id="PR:Q5F3V0"/>
<dbReference type="Proteomes" id="UP000000539">
    <property type="component" value="Unassembled WGS sequence"/>
</dbReference>
<dbReference type="GO" id="GO:0005737">
    <property type="term" value="C:cytoplasm"/>
    <property type="evidence" value="ECO:0000250"/>
    <property type="project" value="UniProtKB"/>
</dbReference>
<dbReference type="GO" id="GO:0005634">
    <property type="term" value="C:nucleus"/>
    <property type="evidence" value="ECO:0000250"/>
    <property type="project" value="UniProtKB"/>
</dbReference>
<dbReference type="GO" id="GO:0042826">
    <property type="term" value="F:histone deacetylase binding"/>
    <property type="evidence" value="ECO:0000318"/>
    <property type="project" value="GO_Central"/>
</dbReference>
<dbReference type="GO" id="GO:0008168">
    <property type="term" value="F:methyltransferase activity"/>
    <property type="evidence" value="ECO:0007669"/>
    <property type="project" value="UniProtKB-KW"/>
</dbReference>
<dbReference type="GO" id="GO:0008270">
    <property type="term" value="F:zinc ion binding"/>
    <property type="evidence" value="ECO:0007669"/>
    <property type="project" value="UniProtKB-KW"/>
</dbReference>
<dbReference type="GO" id="GO:0007507">
    <property type="term" value="P:heart development"/>
    <property type="evidence" value="ECO:0000250"/>
    <property type="project" value="UniProtKB"/>
</dbReference>
<dbReference type="GO" id="GO:0032259">
    <property type="term" value="P:methylation"/>
    <property type="evidence" value="ECO:0007669"/>
    <property type="project" value="UniProtKB-KW"/>
</dbReference>
<dbReference type="CDD" id="cd10536">
    <property type="entry name" value="SET_SMYD4"/>
    <property type="match status" value="1"/>
</dbReference>
<dbReference type="Gene3D" id="1.25.40.10">
    <property type="entry name" value="Tetratricopeptide repeat domain"/>
    <property type="match status" value="2"/>
</dbReference>
<dbReference type="InterPro" id="IPR052097">
    <property type="entry name" value="SET-MYND_domain_protein"/>
</dbReference>
<dbReference type="InterPro" id="IPR001214">
    <property type="entry name" value="SET_dom"/>
</dbReference>
<dbReference type="InterPro" id="IPR046341">
    <property type="entry name" value="SET_dom_sf"/>
</dbReference>
<dbReference type="InterPro" id="IPR044421">
    <property type="entry name" value="SMYD4_SET"/>
</dbReference>
<dbReference type="InterPro" id="IPR011990">
    <property type="entry name" value="TPR-like_helical_dom_sf"/>
</dbReference>
<dbReference type="InterPro" id="IPR002893">
    <property type="entry name" value="Znf_MYND"/>
</dbReference>
<dbReference type="PANTHER" id="PTHR46165">
    <property type="entry name" value="SET AND MYND DOMAIN-CONTAINING PROTEIN 4"/>
    <property type="match status" value="1"/>
</dbReference>
<dbReference type="PANTHER" id="PTHR46165:SF2">
    <property type="entry name" value="SET AND MYND DOMAIN-CONTAINING PROTEIN 4"/>
    <property type="match status" value="1"/>
</dbReference>
<dbReference type="Pfam" id="PF00856">
    <property type="entry name" value="SET"/>
    <property type="match status" value="1"/>
</dbReference>
<dbReference type="Pfam" id="PF01753">
    <property type="entry name" value="zf-MYND"/>
    <property type="match status" value="1"/>
</dbReference>
<dbReference type="SUPFAM" id="SSF144232">
    <property type="entry name" value="HIT/MYND zinc finger-like"/>
    <property type="match status" value="1"/>
</dbReference>
<dbReference type="SUPFAM" id="SSF82199">
    <property type="entry name" value="SET domain"/>
    <property type="match status" value="1"/>
</dbReference>
<dbReference type="SUPFAM" id="SSF48452">
    <property type="entry name" value="TPR-like"/>
    <property type="match status" value="2"/>
</dbReference>
<dbReference type="PROSITE" id="PS50280">
    <property type="entry name" value="SET"/>
    <property type="match status" value="1"/>
</dbReference>
<dbReference type="PROSITE" id="PS01360">
    <property type="entry name" value="ZF_MYND_1"/>
    <property type="match status" value="1"/>
</dbReference>
<dbReference type="PROSITE" id="PS50865">
    <property type="entry name" value="ZF_MYND_2"/>
    <property type="match status" value="1"/>
</dbReference>
<gene>
    <name type="primary">SMYD4</name>
    <name type="ORF">RCJMB04_6f24</name>
</gene>
<keyword id="KW-0963">Cytoplasm</keyword>
<keyword id="KW-0479">Metal-binding</keyword>
<keyword id="KW-0489">Methyltransferase</keyword>
<keyword id="KW-0539">Nucleus</keyword>
<keyword id="KW-1185">Reference proteome</keyword>
<keyword id="KW-0949">S-adenosyl-L-methionine</keyword>
<keyword id="KW-0808">Transferase</keyword>
<keyword id="KW-0862">Zinc</keyword>
<keyword id="KW-0863">Zinc-finger</keyword>
<organism>
    <name type="scientific">Gallus gallus</name>
    <name type="common">Chicken</name>
    <dbReference type="NCBI Taxonomy" id="9031"/>
    <lineage>
        <taxon>Eukaryota</taxon>
        <taxon>Metazoa</taxon>
        <taxon>Chordata</taxon>
        <taxon>Craniata</taxon>
        <taxon>Vertebrata</taxon>
        <taxon>Euteleostomi</taxon>
        <taxon>Archelosauria</taxon>
        <taxon>Archosauria</taxon>
        <taxon>Dinosauria</taxon>
        <taxon>Saurischia</taxon>
        <taxon>Theropoda</taxon>
        <taxon>Coelurosauria</taxon>
        <taxon>Aves</taxon>
        <taxon>Neognathae</taxon>
        <taxon>Galloanserae</taxon>
        <taxon>Galliformes</taxon>
        <taxon>Phasianidae</taxon>
        <taxon>Phasianinae</taxon>
        <taxon>Gallus</taxon>
    </lineage>
</organism>
<accession>Q5F3V0</accession>
<sequence>MALPVEEWRRSAARCWAALEPALRERLAAAPLGEALRMGCGLFGPEEAALQRLCRRARTGKEPAAARFYREEGNRQFGRCCYRDAVRLYSQAAAHEPPRSPEVALCFANRSAALFHLGHFEVCLEDIARAESHGYPDRLLPKVLLRKAECLLRLGRLQDATDTLTAVENKMAVDGIMTSPIHRMLLKKLSQLKTEIHEGSCPEPAREADGDVQRESEIWEENGSISGASSSLSLNFSTERGRHLVASQDILPGQNLLKEKAFVSVLCPGEGDSLLLQDSSETVWDTRVTNADLYCHHCLKQLLASIPCCGCSYAKYCSQNCADVAWEQYHRTECPLGALLLTLGVFFHVALRTVLLAGFSEVSRLVEWSRDDSNKDLCNAEAGGEHPSEALDTRAGRKVIPGCNDNGQYQSSYQAVFNLLPHVEKHSPEHKFLCMLSIVAICKKLQETGLEAAVLNGESSTTGSEQKTCGKTSDELSPELMIMAEAMLRHVLQLQCNAQAITVMQELESGDGAVVNKKPVRLATAFFPVLSLLNHSCSPNISVSFSGTAATVRASQPIPSGQEIFHCYGEEMLCCSSEACAFSVSRERLSQRLLDLQQQMEKALELLRDSKADEAIKMLLKCQIDARNFLSPEHLLMGELEDHLAQVYATLGKWQEAARHLGRSIQLVEMHHGPSSVEMGHELFKLAQILFNGFAVSEALSTIQRAEEILSVHCGPQSTQIQELQEMKTCLLELPRSILQRT</sequence>
<feature type="chain" id="PRO_0000227787" description="Protein-lysine N-methyltransferase SMYD4">
    <location>
        <begin position="1"/>
        <end position="742"/>
    </location>
</feature>
<feature type="domain" description="SET" evidence="7">
    <location>
        <begin position="230"/>
        <end position="569"/>
    </location>
</feature>
<feature type="zinc finger region" description="MYND-type" evidence="6">
    <location>
        <begin position="295"/>
        <end position="334"/>
    </location>
</feature>
<feature type="binding site" evidence="1">
    <location>
        <begin position="110"/>
        <end position="112"/>
    </location>
    <ligand>
        <name>S-adenosyl-L-methionine</name>
        <dbReference type="ChEBI" id="CHEBI:59789"/>
    </ligand>
</feature>
<feature type="binding site" evidence="6">
    <location>
        <position position="295"/>
    </location>
    <ligand>
        <name>Zn(2+)</name>
        <dbReference type="ChEBI" id="CHEBI:29105"/>
        <label>1</label>
    </ligand>
</feature>
<feature type="binding site" evidence="6">
    <location>
        <position position="298"/>
    </location>
    <ligand>
        <name>Zn(2+)</name>
        <dbReference type="ChEBI" id="CHEBI:29105"/>
        <label>1</label>
    </ligand>
</feature>
<feature type="binding site" evidence="6">
    <location>
        <position position="308"/>
    </location>
    <ligand>
        <name>Zn(2+)</name>
        <dbReference type="ChEBI" id="CHEBI:29105"/>
        <label>2</label>
    </ligand>
</feature>
<feature type="binding site" evidence="6">
    <location>
        <position position="311"/>
    </location>
    <ligand>
        <name>Zn(2+)</name>
        <dbReference type="ChEBI" id="CHEBI:29105"/>
        <label>2</label>
    </ligand>
</feature>
<feature type="binding site" evidence="6">
    <location>
        <position position="317"/>
    </location>
    <ligand>
        <name>Zn(2+)</name>
        <dbReference type="ChEBI" id="CHEBI:29105"/>
        <label>1</label>
    </ligand>
</feature>
<feature type="binding site" evidence="6">
    <location>
        <position position="321"/>
    </location>
    <ligand>
        <name>Zn(2+)</name>
        <dbReference type="ChEBI" id="CHEBI:29105"/>
        <label>1</label>
    </ligand>
</feature>
<feature type="binding site" evidence="6">
    <location>
        <position position="330"/>
    </location>
    <ligand>
        <name>Zn(2+)</name>
        <dbReference type="ChEBI" id="CHEBI:29105"/>
        <label>2</label>
    </ligand>
</feature>
<feature type="binding site" evidence="6">
    <location>
        <position position="334"/>
    </location>
    <ligand>
        <name>Zn(2+)</name>
        <dbReference type="ChEBI" id="CHEBI:29105"/>
        <label>2</label>
    </ligand>
</feature>
<feature type="binding site" evidence="7">
    <location>
        <position position="418"/>
    </location>
    <ligand>
        <name>S-adenosyl-L-methionine</name>
        <dbReference type="ChEBI" id="CHEBI:59789"/>
    </ligand>
</feature>
<feature type="binding site" evidence="5">
    <location>
        <begin position="534"/>
        <end position="535"/>
    </location>
    <ligand>
        <name>S-adenosyl-L-methionine</name>
        <dbReference type="ChEBI" id="CHEBI:59789"/>
    </ligand>
</feature>
<feature type="binding site" evidence="7">
    <location>
        <position position="568"/>
    </location>
    <ligand>
        <name>S-adenosyl-L-methionine</name>
        <dbReference type="ChEBI" id="CHEBI:59789"/>
    </ligand>
</feature>
<evidence type="ECO:0000250" key="1"/>
<evidence type="ECO:0000250" key="2">
    <source>
        <dbReference type="UniProtKB" id="Q08C84"/>
    </source>
</evidence>
<evidence type="ECO:0000250" key="3">
    <source>
        <dbReference type="UniProtKB" id="Q8BTK5"/>
    </source>
</evidence>
<evidence type="ECO:0000250" key="4">
    <source>
        <dbReference type="UniProtKB" id="Q8IYR2"/>
    </source>
</evidence>
<evidence type="ECO:0000250" key="5">
    <source>
        <dbReference type="UniProtKB" id="Q9H7B4"/>
    </source>
</evidence>
<evidence type="ECO:0000255" key="6">
    <source>
        <dbReference type="PROSITE-ProRule" id="PRU00134"/>
    </source>
</evidence>
<evidence type="ECO:0000255" key="7">
    <source>
        <dbReference type="PROSITE-ProRule" id="PRU00190"/>
    </source>
</evidence>
<name>SMYD4_CHICK</name>
<reference key="1">
    <citation type="journal article" date="2005" name="Genome Biol.">
        <title>Full-length cDNAs from chicken bursal lymphocytes to facilitate gene function analysis.</title>
        <authorList>
            <person name="Caldwell R.B."/>
            <person name="Kierzek A.M."/>
            <person name="Arakawa H."/>
            <person name="Bezzubov Y."/>
            <person name="Zaim J."/>
            <person name="Fiedler P."/>
            <person name="Kutter S."/>
            <person name="Blagodatski A."/>
            <person name="Kostovska D."/>
            <person name="Koter M."/>
            <person name="Plachy J."/>
            <person name="Carninci P."/>
            <person name="Hayashizaki Y."/>
            <person name="Buerstedde J.-M."/>
        </authorList>
    </citation>
    <scope>NUCLEOTIDE SEQUENCE [LARGE SCALE MRNA]</scope>
    <source>
        <strain>CB</strain>
        <tissue>Bursa of Fabricius</tissue>
    </source>
</reference>
<comment type="function">
    <text evidence="2 4">Protein-lysine N-methyltransferase. Monomethylates PRMT5, modulating its transcriptional activity (By similarity). May also act as a histone methyltransferase (By similarity). Plays a critical role in cardiac development. Acts as a key epigenetic regulator of gene expression during cardiac development via its dual activities as a methyltransferase and negative regulator of HDAC1 (By similarity).</text>
</comment>
<comment type="catalytic activity">
    <reaction evidence="4">
        <text>L-lysyl-[protein] + S-adenosyl-L-methionine = N(6)-methyl-L-lysyl-[protein] + S-adenosyl-L-homocysteine + H(+)</text>
        <dbReference type="Rhea" id="RHEA:51736"/>
        <dbReference type="Rhea" id="RHEA-COMP:9752"/>
        <dbReference type="Rhea" id="RHEA-COMP:13053"/>
        <dbReference type="ChEBI" id="CHEBI:15378"/>
        <dbReference type="ChEBI" id="CHEBI:29969"/>
        <dbReference type="ChEBI" id="CHEBI:57856"/>
        <dbReference type="ChEBI" id="CHEBI:59789"/>
        <dbReference type="ChEBI" id="CHEBI:61929"/>
    </reaction>
</comment>
<comment type="subcellular location">
    <subcellularLocation>
        <location evidence="3">Nucleus</location>
    </subcellularLocation>
    <subcellularLocation>
        <location evidence="3">Cytoplasm</location>
    </subcellularLocation>
</comment>
<comment type="similarity">
    <text evidence="7">Belongs to the class V-like SAM-binding methyltransferase superfamily.</text>
</comment>